<protein>
    <recommendedName>
        <fullName evidence="8">TATA-box-binding protein 1</fullName>
        <shortName evidence="8">AtTBP1</shortName>
    </recommendedName>
    <alternativeName>
        <fullName evidence="8">TATA sequence-binding protein 1</fullName>
        <shortName evidence="8">TBP-1</shortName>
    </alternativeName>
    <alternativeName>
        <fullName evidence="8">TATA-binding factor 1</fullName>
    </alternativeName>
    <alternativeName>
        <fullName evidence="8">TATA-box factor 1</fullName>
    </alternativeName>
    <alternativeName>
        <fullName evidence="9">Transcription initiation factor TFIID TBP-1 subunit</fullName>
    </alternativeName>
</protein>
<feature type="initiator methionine" description="Removed" evidence="13">
    <location>
        <position position="1"/>
    </location>
</feature>
<feature type="chain" id="PRO_0000153976" description="TATA-box-binding protein 1">
    <location>
        <begin position="2"/>
        <end position="200"/>
    </location>
</feature>
<feature type="repeat" description="1" evidence="1">
    <location>
        <begin position="25"/>
        <end position="101"/>
    </location>
</feature>
<feature type="repeat" description="2" evidence="1">
    <location>
        <begin position="115"/>
        <end position="192"/>
    </location>
</feature>
<feature type="modified residue" description="N-acetylthreonine" evidence="13">
    <location>
        <position position="2"/>
    </location>
</feature>
<feature type="turn" evidence="14">
    <location>
        <begin position="14"/>
        <end position="16"/>
    </location>
</feature>
<feature type="strand" evidence="14">
    <location>
        <begin position="24"/>
        <end position="33"/>
    </location>
</feature>
<feature type="helix" evidence="14">
    <location>
        <begin position="40"/>
        <end position="46"/>
    </location>
</feature>
<feature type="strand" evidence="14">
    <location>
        <begin position="48"/>
        <end position="52"/>
    </location>
</feature>
<feature type="turn" evidence="14">
    <location>
        <begin position="54"/>
        <end position="56"/>
    </location>
</feature>
<feature type="strand" evidence="14">
    <location>
        <begin position="58"/>
        <end position="64"/>
    </location>
</feature>
<feature type="turn" evidence="14">
    <location>
        <begin position="65"/>
        <end position="68"/>
    </location>
</feature>
<feature type="strand" evidence="14">
    <location>
        <begin position="69"/>
        <end position="73"/>
    </location>
</feature>
<feature type="strand" evidence="14">
    <location>
        <begin position="77"/>
        <end position="86"/>
    </location>
</feature>
<feature type="helix" evidence="14">
    <location>
        <begin position="87"/>
        <end position="103"/>
    </location>
</feature>
<feature type="strand" evidence="14">
    <location>
        <begin position="111"/>
        <end position="123"/>
    </location>
</feature>
<feature type="helix" evidence="14">
    <location>
        <begin position="130"/>
        <end position="136"/>
    </location>
</feature>
<feature type="turn" evidence="14">
    <location>
        <begin position="137"/>
        <end position="140"/>
    </location>
</feature>
<feature type="strand" evidence="15">
    <location>
        <begin position="141"/>
        <end position="143"/>
    </location>
</feature>
<feature type="turn" evidence="14">
    <location>
        <begin position="145"/>
        <end position="147"/>
    </location>
</feature>
<feature type="strand" evidence="14">
    <location>
        <begin position="149"/>
        <end position="155"/>
    </location>
</feature>
<feature type="turn" evidence="14">
    <location>
        <begin position="156"/>
        <end position="159"/>
    </location>
</feature>
<feature type="strand" evidence="14">
    <location>
        <begin position="160"/>
        <end position="164"/>
    </location>
</feature>
<feature type="strand" evidence="14">
    <location>
        <begin position="168"/>
        <end position="177"/>
    </location>
</feature>
<feature type="helix" evidence="14">
    <location>
        <begin position="178"/>
        <end position="194"/>
    </location>
</feature>
<reference key="1">
    <citation type="journal article" date="1990" name="Nature">
        <title>Arabidopsis thaliana contains two genes for TFIID.</title>
        <authorList>
            <person name="Gasch A."/>
            <person name="Hoffmann A."/>
            <person name="Horikoshi M."/>
            <person name="Roeder R.G."/>
            <person name="Chua N.-H."/>
        </authorList>
    </citation>
    <scope>NUCLEOTIDE SEQUENCE [MRNA]</scope>
    <scope>FUNCTION</scope>
</reference>
<reference key="2">
    <citation type="submission" date="2003-11" db="EMBL/GenBank/DDBJ databases">
        <title>Binary protein-protein interactions of the Arabidopsis thaliana general transcription factor IId.</title>
        <authorList>
            <person name="Lawit S.J."/>
            <person name="Gurley W.B."/>
        </authorList>
    </citation>
    <scope>NUCLEOTIDE SEQUENCE [MRNA]</scope>
</reference>
<reference key="3">
    <citation type="journal article" date="2000" name="DNA Res.">
        <title>Structural analysis of Arabidopsis thaliana chromosome 3. II. Sequence features of the 4,251,695 bp regions covered by 90 P1, TAC and BAC clones.</title>
        <authorList>
            <person name="Kaneko T."/>
            <person name="Katoh T."/>
            <person name="Sato S."/>
            <person name="Nakamura Y."/>
            <person name="Asamizu E."/>
            <person name="Tabata S."/>
        </authorList>
    </citation>
    <scope>NUCLEOTIDE SEQUENCE [LARGE SCALE GENOMIC DNA]</scope>
    <source>
        <strain>cv. Columbia</strain>
    </source>
</reference>
<reference key="4">
    <citation type="journal article" date="2017" name="Plant J.">
        <title>Araport11: a complete reannotation of the Arabidopsis thaliana reference genome.</title>
        <authorList>
            <person name="Cheng C.Y."/>
            <person name="Krishnakumar V."/>
            <person name="Chan A.P."/>
            <person name="Thibaud-Nissen F."/>
            <person name="Schobel S."/>
            <person name="Town C.D."/>
        </authorList>
    </citation>
    <scope>GENOME REANNOTATION</scope>
    <source>
        <strain>cv. Columbia</strain>
    </source>
</reference>
<reference key="5">
    <citation type="journal article" date="2003" name="Science">
        <title>Empirical analysis of transcriptional activity in the Arabidopsis genome.</title>
        <authorList>
            <person name="Yamada K."/>
            <person name="Lim J."/>
            <person name="Dale J.M."/>
            <person name="Chen H."/>
            <person name="Shinn P."/>
            <person name="Palm C.J."/>
            <person name="Southwick A.M."/>
            <person name="Wu H.C."/>
            <person name="Kim C.J."/>
            <person name="Nguyen M."/>
            <person name="Pham P.K."/>
            <person name="Cheuk R.F."/>
            <person name="Karlin-Newmann G."/>
            <person name="Liu S.X."/>
            <person name="Lam B."/>
            <person name="Sakano H."/>
            <person name="Wu T."/>
            <person name="Yu G."/>
            <person name="Miranda M."/>
            <person name="Quach H.L."/>
            <person name="Tripp M."/>
            <person name="Chang C.H."/>
            <person name="Lee J.M."/>
            <person name="Toriumi M.J."/>
            <person name="Chan M.M."/>
            <person name="Tang C.C."/>
            <person name="Onodera C.S."/>
            <person name="Deng J.M."/>
            <person name="Akiyama K."/>
            <person name="Ansari Y."/>
            <person name="Arakawa T."/>
            <person name="Banh J."/>
            <person name="Banno F."/>
            <person name="Bowser L."/>
            <person name="Brooks S.Y."/>
            <person name="Carninci P."/>
            <person name="Chao Q."/>
            <person name="Choy N."/>
            <person name="Enju A."/>
            <person name="Goldsmith A.D."/>
            <person name="Gurjal M."/>
            <person name="Hansen N.F."/>
            <person name="Hayashizaki Y."/>
            <person name="Johnson-Hopson C."/>
            <person name="Hsuan V.W."/>
            <person name="Iida K."/>
            <person name="Karnes M."/>
            <person name="Khan S."/>
            <person name="Koesema E."/>
            <person name="Ishida J."/>
            <person name="Jiang P.X."/>
            <person name="Jones T."/>
            <person name="Kawai J."/>
            <person name="Kamiya A."/>
            <person name="Meyers C."/>
            <person name="Nakajima M."/>
            <person name="Narusaka M."/>
            <person name="Seki M."/>
            <person name="Sakurai T."/>
            <person name="Satou M."/>
            <person name="Tamse R."/>
            <person name="Vaysberg M."/>
            <person name="Wallender E.K."/>
            <person name="Wong C."/>
            <person name="Yamamura Y."/>
            <person name="Yuan S."/>
            <person name="Shinozaki K."/>
            <person name="Davis R.W."/>
            <person name="Theologis A."/>
            <person name="Ecker J.R."/>
        </authorList>
    </citation>
    <scope>NUCLEOTIDE SEQUENCE [LARGE SCALE MRNA]</scope>
    <source>
        <strain>cv. Columbia</strain>
    </source>
</reference>
<reference key="6">
    <citation type="submission" date="2002-03" db="EMBL/GenBank/DDBJ databases">
        <title>Full-length cDNA from Arabidopsis thaliana.</title>
        <authorList>
            <person name="Brover V.V."/>
            <person name="Troukhan M.E."/>
            <person name="Alexandrov N.A."/>
            <person name="Lu Y.-P."/>
            <person name="Flavell R.B."/>
            <person name="Feldmann K.A."/>
        </authorList>
    </citation>
    <scope>NUCLEOTIDE SEQUENCE [LARGE SCALE MRNA]</scope>
</reference>
<reference key="7">
    <citation type="submission" date="2009-03" db="EMBL/GenBank/DDBJ databases">
        <title>ORF cloning and analysis of Arabidopsis transcription factor genes.</title>
        <authorList>
            <person name="Fujita M."/>
            <person name="Mizukado S."/>
            <person name="Seki M."/>
            <person name="Shinozaki K."/>
            <person name="Mitsuda N."/>
            <person name="Takiguchi Y."/>
            <person name="Takagi M."/>
        </authorList>
    </citation>
    <scope>NUCLEOTIDE SEQUENCE [LARGE SCALE MRNA]</scope>
</reference>
<reference key="8">
    <citation type="journal article" date="2007" name="Plant Mol. Biol.">
        <title>Yeast two-hybrid map of Arabidopsis TFIID.</title>
        <authorList>
            <person name="Lawit S.J."/>
            <person name="O'Grady K."/>
            <person name="Gurley W.B."/>
            <person name="Czarnecka-Verner E."/>
        </authorList>
    </citation>
    <scope>INTERACTION WITH TAF1</scope>
</reference>
<reference key="9">
    <citation type="journal article" date="2010" name="Plant J.">
        <title>Detection of protein-protein interactions in plants using the transrepressive activity of the EAR motif repression domain.</title>
        <authorList>
            <person name="Matsui K."/>
            <person name="Ohme-Takagi M."/>
        </authorList>
    </citation>
    <scope>INTERACTION WITH PWP2</scope>
    <scope>SUBCELLULAR LOCATION</scope>
    <source>
        <strain>cv. Columbia</strain>
    </source>
</reference>
<reference key="10">
    <citation type="journal article" date="2011" name="Plant Cell">
        <title>Two distinct roles of ARABIDOPSIS HOMOLOG OF TRITHORAX1 (ATX1) at promoters and within transcribed regions of ATX1-regulated genes.</title>
        <authorList>
            <person name="Ding Y."/>
            <person name="Avramova Z."/>
            <person name="Fromm M."/>
        </authorList>
    </citation>
    <scope>SUBUNIT</scope>
    <source>
        <strain>cv. Wassilewskija</strain>
    </source>
</reference>
<reference key="11">
    <citation type="journal article" date="2012" name="Mol. Cell. Proteomics">
        <title>Comparative large-scale characterisation of plant vs. mammal proteins reveals similar and idiosyncratic N-alpha acetylation features.</title>
        <authorList>
            <person name="Bienvenut W.V."/>
            <person name="Sumpton D."/>
            <person name="Martinez A."/>
            <person name="Lilla S."/>
            <person name="Espagne C."/>
            <person name="Meinnel T."/>
            <person name="Giglione C."/>
        </authorList>
    </citation>
    <scope>ACETYLATION [LARGE SCALE ANALYSIS] AT THR-2</scope>
    <scope>CLEAVAGE OF INITIATOR METHIONINE [LARGE SCALE ANALYSIS]</scope>
    <scope>IDENTIFICATION BY MASS SPECTROMETRY [LARGE SCALE ANALYSIS]</scope>
</reference>
<reference key="12">
    <citation type="journal article" date="2015" name="Plant Cell">
        <title>Arabidopsis CBP1 is a novel regulator of transcription initiation in central cell-mediated pollen tube guidance.</title>
        <authorList>
            <person name="Li H.J."/>
            <person name="Zhu S.S."/>
            <person name="Zhang M.X."/>
            <person name="Wang T."/>
            <person name="Liang L."/>
            <person name="Xue Y."/>
            <person name="Shi D.Q."/>
            <person name="Liu J."/>
            <person name="Yang W.C."/>
        </authorList>
    </citation>
    <scope>INTERACTION WITH MEE12/CCG1</scope>
</reference>
<reference key="13">
    <citation type="journal article" date="1994" name="Nat. Struct. Biol.">
        <title>2.1 A resolution refined structure of a TATA box-binding protein (TBP).</title>
        <authorList>
            <person name="Nikolov D.B."/>
            <person name="Burley S.K."/>
        </authorList>
    </citation>
    <scope>X-RAY CRYSTALLOGRAPHY (2.1 ANGSTROMS) OF 7-199</scope>
</reference>
<reference key="14">
    <citation type="journal article" date="1995" name="Nature">
        <title>Crystal structure of a TFIIB-TBP-TATA-element ternary complex.</title>
        <authorList>
            <person name="Nikolov D.B."/>
            <person name="Chen H."/>
            <person name="Halay E.D."/>
            <person name="Usheva A.A."/>
            <person name="Hisatake K."/>
            <person name="Lee D.K."/>
            <person name="Roeder R.G."/>
            <person name="Burley S.K."/>
        </authorList>
    </citation>
    <scope>X-RAY CRYSTALLOGRAPHY (2.7 ANGSTROMS) OF COMPLEX WITH TFIIB</scope>
</reference>
<reference key="15">
    <citation type="journal article" date="1999" name="Genes Dev.">
        <title>TATA element recognition by the TATA box-binding protein has been conserved throughout evolution.</title>
        <authorList>
            <person name="Patikoglou G.A."/>
            <person name="Kim J.L."/>
            <person name="Sun L."/>
            <person name="Yang S.H."/>
            <person name="Kodadek T."/>
            <person name="Burley S.K."/>
        </authorList>
    </citation>
    <scope>X-RAY CRYSTALLOGRAPHY (1.9 ANGSTROMS)</scope>
</reference>
<gene>
    <name evidence="8" type="primary">TBP1</name>
    <name evidence="11" type="ordered locus">At3g13445</name>
    <name evidence="12" type="ORF">MRP15.10</name>
</gene>
<sequence length="200" mass="22368">MTDQGLEGSNPVDLSKHPSGIVPTLQNIVSTVNLDCKLDLKAIALQARNAEYNPKRFAAVIMRIREPKTTALIFASGKMVCTGAKSEDFSKMAARKYARIVQKLGFPAKFKDFKIQNIVGSCDVKFPIRLEGLAYSHAAFSSYEPELFPGLIYRMKVPKIVLLIFVSGKIVITGAKMRDETYKAFENIYPVLSEFRKIQQ</sequence>
<dbReference type="EMBL" id="X54996">
    <property type="protein sequence ID" value="CAA38743.1"/>
    <property type="molecule type" value="mRNA"/>
</dbReference>
<dbReference type="EMBL" id="AY463625">
    <property type="protein sequence ID" value="AAR28027.1"/>
    <property type="molecule type" value="mRNA"/>
</dbReference>
<dbReference type="EMBL" id="AP000603">
    <property type="protein sequence ID" value="BAB01751.1"/>
    <property type="molecule type" value="Genomic_DNA"/>
</dbReference>
<dbReference type="EMBL" id="CP002686">
    <property type="protein sequence ID" value="AEE75355.1"/>
    <property type="molecule type" value="Genomic_DNA"/>
</dbReference>
<dbReference type="EMBL" id="AF324696">
    <property type="protein sequence ID" value="AAG40047.1"/>
    <property type="molecule type" value="mRNA"/>
</dbReference>
<dbReference type="EMBL" id="AF327429">
    <property type="protein sequence ID" value="AAG42019.1"/>
    <property type="molecule type" value="mRNA"/>
</dbReference>
<dbReference type="EMBL" id="AF349523">
    <property type="protein sequence ID" value="AAK15570.1"/>
    <property type="molecule type" value="mRNA"/>
</dbReference>
<dbReference type="EMBL" id="AY054608">
    <property type="protein sequence ID" value="AAK96799.1"/>
    <property type="molecule type" value="mRNA"/>
</dbReference>
<dbReference type="EMBL" id="AY072455">
    <property type="protein sequence ID" value="AAL66870.1"/>
    <property type="molecule type" value="mRNA"/>
</dbReference>
<dbReference type="EMBL" id="AY084881">
    <property type="protein sequence ID" value="AAM61444.1"/>
    <property type="molecule type" value="mRNA"/>
</dbReference>
<dbReference type="EMBL" id="AB493611">
    <property type="protein sequence ID" value="BAH30449.1"/>
    <property type="molecule type" value="mRNA"/>
</dbReference>
<dbReference type="PIR" id="S10946">
    <property type="entry name" value="S10946"/>
</dbReference>
<dbReference type="RefSeq" id="NP_187953.1">
    <molecule id="P28147-1"/>
    <property type="nucleotide sequence ID" value="NM_112190.5"/>
</dbReference>
<dbReference type="PDB" id="1QN3">
    <property type="method" value="X-ray"/>
    <property type="resolution" value="1.95 A"/>
    <property type="chains" value="A/B=1-200"/>
</dbReference>
<dbReference type="PDB" id="1QN4">
    <property type="method" value="X-ray"/>
    <property type="resolution" value="1.86 A"/>
    <property type="chains" value="A/B=1-200"/>
</dbReference>
<dbReference type="PDB" id="1QN5">
    <property type="method" value="X-ray"/>
    <property type="resolution" value="1.93 A"/>
    <property type="chains" value="A/B=1-200"/>
</dbReference>
<dbReference type="PDB" id="1QN6">
    <property type="method" value="X-ray"/>
    <property type="resolution" value="2.10 A"/>
    <property type="chains" value="A/B=1-200"/>
</dbReference>
<dbReference type="PDB" id="1QN7">
    <property type="method" value="X-ray"/>
    <property type="resolution" value="2.30 A"/>
    <property type="chains" value="A/B=1-200"/>
</dbReference>
<dbReference type="PDB" id="1QN8">
    <property type="method" value="X-ray"/>
    <property type="resolution" value="2.10 A"/>
    <property type="chains" value="A/B=1-200"/>
</dbReference>
<dbReference type="PDB" id="1QN9">
    <property type="method" value="X-ray"/>
    <property type="resolution" value="1.90 A"/>
    <property type="chains" value="A/B=1-200"/>
</dbReference>
<dbReference type="PDB" id="1QNA">
    <property type="method" value="X-ray"/>
    <property type="resolution" value="1.80 A"/>
    <property type="chains" value="A/B=1-200"/>
</dbReference>
<dbReference type="PDB" id="1QNB">
    <property type="method" value="X-ray"/>
    <property type="resolution" value="2.23 A"/>
    <property type="chains" value="A/B=1-200"/>
</dbReference>
<dbReference type="PDB" id="1QNC">
    <property type="method" value="X-ray"/>
    <property type="resolution" value="2.30 A"/>
    <property type="chains" value="A/B=1-200"/>
</dbReference>
<dbReference type="PDB" id="1QNE">
    <property type="method" value="X-ray"/>
    <property type="resolution" value="1.90 A"/>
    <property type="chains" value="A/B=1-200"/>
</dbReference>
<dbReference type="PDB" id="1VOK">
    <property type="method" value="X-ray"/>
    <property type="resolution" value="2.10 A"/>
    <property type="chains" value="A/B=1-200"/>
</dbReference>
<dbReference type="PDB" id="1VOL">
    <property type="method" value="X-ray"/>
    <property type="resolution" value="2.70 A"/>
    <property type="chains" value="B=1-200"/>
</dbReference>
<dbReference type="PDB" id="1VTL">
    <property type="method" value="X-ray"/>
    <property type="resolution" value="2.25 A"/>
    <property type="chains" value="E/F=13-198"/>
</dbReference>
<dbReference type="PDB" id="1VTO">
    <property type="method" value="X-ray"/>
    <property type="resolution" value="1.90 A"/>
    <property type="chains" value="A/B=11-200"/>
</dbReference>
<dbReference type="PDB" id="6NJQ">
    <property type="method" value="X-ray"/>
    <property type="resolution" value="2.75 A"/>
    <property type="chains" value="A/B=1-200"/>
</dbReference>
<dbReference type="PDB" id="6UEO">
    <property type="method" value="X-ray"/>
    <property type="resolution" value="2.00 A"/>
    <property type="chains" value="A/D/G/J=1-200"/>
</dbReference>
<dbReference type="PDB" id="6UEP">
    <property type="method" value="X-ray"/>
    <property type="resolution" value="2.05 A"/>
    <property type="chains" value="A/B=1-200"/>
</dbReference>
<dbReference type="PDB" id="6UEQ">
    <property type="method" value="X-ray"/>
    <property type="resolution" value="2.40 A"/>
    <property type="chains" value="B=1-200"/>
</dbReference>
<dbReference type="PDB" id="6UER">
    <property type="method" value="X-ray"/>
    <property type="resolution" value="2.50 A"/>
    <property type="chains" value="A/B=1-200"/>
</dbReference>
<dbReference type="PDBsum" id="1QN3"/>
<dbReference type="PDBsum" id="1QN4"/>
<dbReference type="PDBsum" id="1QN5"/>
<dbReference type="PDBsum" id="1QN6"/>
<dbReference type="PDBsum" id="1QN7"/>
<dbReference type="PDBsum" id="1QN8"/>
<dbReference type="PDBsum" id="1QN9"/>
<dbReference type="PDBsum" id="1QNA"/>
<dbReference type="PDBsum" id="1QNB"/>
<dbReference type="PDBsum" id="1QNC"/>
<dbReference type="PDBsum" id="1QNE"/>
<dbReference type="PDBsum" id="1VOK"/>
<dbReference type="PDBsum" id="1VOL"/>
<dbReference type="PDBsum" id="1VTL"/>
<dbReference type="PDBsum" id="1VTO"/>
<dbReference type="PDBsum" id="6NJQ"/>
<dbReference type="PDBsum" id="6UEO"/>
<dbReference type="PDBsum" id="6UEP"/>
<dbReference type="PDBsum" id="6UEQ"/>
<dbReference type="PDBsum" id="6UER"/>
<dbReference type="SMR" id="P28147"/>
<dbReference type="BioGRID" id="5880">
    <property type="interactions" value="2"/>
</dbReference>
<dbReference type="FunCoup" id="P28147">
    <property type="interactions" value="4476"/>
</dbReference>
<dbReference type="IntAct" id="P28147">
    <property type="interactions" value="6"/>
</dbReference>
<dbReference type="MINT" id="P28147"/>
<dbReference type="STRING" id="3702.P28147"/>
<dbReference type="iPTMnet" id="P28147"/>
<dbReference type="PaxDb" id="3702-AT3G13445.1"/>
<dbReference type="ProteomicsDB" id="234157">
    <molecule id="P28147-1"/>
</dbReference>
<dbReference type="EnsemblPlants" id="AT3G13445.1">
    <molecule id="P28147-1"/>
    <property type="protein sequence ID" value="AT3G13445.1"/>
    <property type="gene ID" value="AT3G13445"/>
</dbReference>
<dbReference type="GeneID" id="820546"/>
<dbReference type="Gramene" id="AT3G13445.1">
    <molecule id="P28147-1"/>
    <property type="protein sequence ID" value="AT3G13445.1"/>
    <property type="gene ID" value="AT3G13445"/>
</dbReference>
<dbReference type="KEGG" id="ath:AT3G13445"/>
<dbReference type="Araport" id="AT3G13445"/>
<dbReference type="TAIR" id="AT3G13445">
    <property type="gene designation" value="TBP1"/>
</dbReference>
<dbReference type="eggNOG" id="KOG3302">
    <property type="taxonomic scope" value="Eukaryota"/>
</dbReference>
<dbReference type="HOGENOM" id="CLU_060161_4_2_1"/>
<dbReference type="InParanoid" id="P28147"/>
<dbReference type="OMA" id="MSAITPM"/>
<dbReference type="OrthoDB" id="2127950at2759"/>
<dbReference type="PhylomeDB" id="P28147"/>
<dbReference type="EvolutionaryTrace" id="P28147"/>
<dbReference type="PRO" id="PR:P28147"/>
<dbReference type="Proteomes" id="UP000006548">
    <property type="component" value="Chromosome 3"/>
</dbReference>
<dbReference type="ExpressionAtlas" id="P28147">
    <property type="expression patterns" value="baseline and differential"/>
</dbReference>
<dbReference type="GO" id="GO:0005634">
    <property type="term" value="C:nucleus"/>
    <property type="evidence" value="ECO:0000314"/>
    <property type="project" value="UniProtKB"/>
</dbReference>
<dbReference type="GO" id="GO:0003677">
    <property type="term" value="F:DNA binding"/>
    <property type="evidence" value="ECO:0007669"/>
    <property type="project" value="UniProtKB-KW"/>
</dbReference>
<dbReference type="GO" id="GO:0006352">
    <property type="term" value="P:DNA-templated transcription initiation"/>
    <property type="evidence" value="ECO:0007669"/>
    <property type="project" value="InterPro"/>
</dbReference>
<dbReference type="CDD" id="cd04516">
    <property type="entry name" value="TBP_eukaryotes"/>
    <property type="match status" value="1"/>
</dbReference>
<dbReference type="FunFam" id="3.30.310.10:FF:000001">
    <property type="entry name" value="TATA-box-binding protein 2"/>
    <property type="match status" value="1"/>
</dbReference>
<dbReference type="FunFam" id="3.30.310.10:FF:000002">
    <property type="entry name" value="TATA-box-binding protein 2"/>
    <property type="match status" value="1"/>
</dbReference>
<dbReference type="Gene3D" id="3.30.310.10">
    <property type="entry name" value="TATA-Binding Protein"/>
    <property type="match status" value="2"/>
</dbReference>
<dbReference type="HAMAP" id="MF_00408">
    <property type="entry name" value="TATA_bind_prot_arch"/>
    <property type="match status" value="1"/>
</dbReference>
<dbReference type="InterPro" id="IPR000814">
    <property type="entry name" value="TBP"/>
</dbReference>
<dbReference type="InterPro" id="IPR030491">
    <property type="entry name" value="TBP_CS"/>
</dbReference>
<dbReference type="InterPro" id="IPR012295">
    <property type="entry name" value="TBP_dom_sf"/>
</dbReference>
<dbReference type="InterPro" id="IPR033710">
    <property type="entry name" value="TBP_eukaryotic"/>
</dbReference>
<dbReference type="PANTHER" id="PTHR10126">
    <property type="entry name" value="TATA-BOX BINDING PROTEIN"/>
    <property type="match status" value="1"/>
</dbReference>
<dbReference type="Pfam" id="PF00352">
    <property type="entry name" value="TBP"/>
    <property type="match status" value="2"/>
</dbReference>
<dbReference type="PRINTS" id="PR00686">
    <property type="entry name" value="TIFACTORIID"/>
</dbReference>
<dbReference type="SUPFAM" id="SSF55945">
    <property type="entry name" value="TATA-box binding protein-like"/>
    <property type="match status" value="2"/>
</dbReference>
<dbReference type="PROSITE" id="PS00351">
    <property type="entry name" value="TFIID"/>
    <property type="match status" value="2"/>
</dbReference>
<name>TBP1_ARATH</name>
<keyword id="KW-0002">3D-structure</keyword>
<keyword id="KW-0007">Acetylation</keyword>
<keyword id="KW-0010">Activator</keyword>
<keyword id="KW-0025">Alternative splicing</keyword>
<keyword id="KW-0238">DNA-binding</keyword>
<keyword id="KW-0539">Nucleus</keyword>
<keyword id="KW-1185">Reference proteome</keyword>
<keyword id="KW-0677">Repeat</keyword>
<keyword id="KW-0804">Transcription</keyword>
<keyword id="KW-0805">Transcription regulation</keyword>
<accession>P28147</accession>
<accession>Q53YT8</accession>
<evidence type="ECO:0000255" key="1"/>
<evidence type="ECO:0000269" key="2">
    <source>
    </source>
</evidence>
<evidence type="ECO:0000269" key="3">
    <source>
    </source>
</evidence>
<evidence type="ECO:0000269" key="4">
    <source>
    </source>
</evidence>
<evidence type="ECO:0000269" key="5">
    <source>
    </source>
</evidence>
<evidence type="ECO:0000269" key="6">
    <source>
    </source>
</evidence>
<evidence type="ECO:0000269" key="7">
    <source>
    </source>
</evidence>
<evidence type="ECO:0000303" key="8">
    <source>
    </source>
</evidence>
<evidence type="ECO:0000303" key="9">
    <source>
    </source>
</evidence>
<evidence type="ECO:0000305" key="10"/>
<evidence type="ECO:0000312" key="11">
    <source>
        <dbReference type="Araport" id="AT3G13445"/>
    </source>
</evidence>
<evidence type="ECO:0000312" key="12">
    <source>
        <dbReference type="EMBL" id="BAB01751.1"/>
    </source>
</evidence>
<evidence type="ECO:0007744" key="13">
    <source>
    </source>
</evidence>
<evidence type="ECO:0007829" key="14">
    <source>
        <dbReference type="PDB" id="1QNA"/>
    </source>
</evidence>
<evidence type="ECO:0007829" key="15">
    <source>
        <dbReference type="PDB" id="1VOK"/>
    </source>
</evidence>
<organism>
    <name type="scientific">Arabidopsis thaliana</name>
    <name type="common">Mouse-ear cress</name>
    <dbReference type="NCBI Taxonomy" id="3702"/>
    <lineage>
        <taxon>Eukaryota</taxon>
        <taxon>Viridiplantae</taxon>
        <taxon>Streptophyta</taxon>
        <taxon>Embryophyta</taxon>
        <taxon>Tracheophyta</taxon>
        <taxon>Spermatophyta</taxon>
        <taxon>Magnoliopsida</taxon>
        <taxon>eudicotyledons</taxon>
        <taxon>Gunneridae</taxon>
        <taxon>Pentapetalae</taxon>
        <taxon>rosids</taxon>
        <taxon>malvids</taxon>
        <taxon>Brassicales</taxon>
        <taxon>Brassicaceae</taxon>
        <taxon>Camelineae</taxon>
        <taxon>Arabidopsis</taxon>
    </lineage>
</organism>
<proteinExistence type="evidence at protein level"/>
<comment type="function">
    <text evidence="5">General transcription factor that functions at the core of the DNA-binding multiprotein factor TFIID. Binding of TFIID to the TATA box is the initial transcriptional step of the pre-initiation complex (PIC), playing a role in the activation of eukaryotic genes transcribed by RNA polymerase II.</text>
</comment>
<comment type="subunit">
    <text evidence="2 3 4 6 7">Belongs to the TFIID complex together with the TBP-associated factors (TAFs) (PubMed:7675079). Binds DNA as monomer. Interacts with TAF1 (via N-terminus) (PubMed:17340043). Interacts with MEE12/CCG1 (PubMed:26462908). Associates with PWP2 in the nucleus (PubMed:19929880). Component of a nuclear protein complex containing at least TATA binding proteins (TBPs, e.g. TBP1 and TBP2) and ATX1 (PubMed:21266657).</text>
</comment>
<comment type="interaction">
    <interactant intactId="EBI-1247453">
        <id>P28147</id>
    </interactant>
    <interactant intactId="EBI-1544927">
        <id>P41151</id>
        <label>HSFA1A</label>
    </interactant>
    <organismsDiffer>false</organismsDiffer>
    <experiments>3</experiments>
</comment>
<comment type="subcellular location">
    <subcellularLocation>
        <location evidence="3">Nucleus</location>
    </subcellularLocation>
</comment>
<comment type="alternative products">
    <event type="alternative splicing"/>
    <isoform>
        <id>P28147-1</id>
        <name>1</name>
        <sequence type="displayed"/>
    </isoform>
    <text evidence="11">A number of isoforms are produced. According to EST sequences.</text>
</comment>
<comment type="similarity">
    <text evidence="10">Belongs to the TBP family.</text>
</comment>